<proteinExistence type="inferred from homology"/>
<protein>
    <recommendedName>
        <fullName>Coat protein</fullName>
    </recommendedName>
    <alternativeName>
        <fullName>Capsid protein</fullName>
        <shortName>CP</shortName>
    </alternativeName>
</protein>
<organismHost>
    <name type="scientific">Cattleya</name>
    <dbReference type="NCBI Taxonomy" id="38236"/>
</organismHost>
<organismHost>
    <name type="scientific">Coelogyne imbricata</name>
    <dbReference type="NCBI Taxonomy" id="141750"/>
</organismHost>
<organismHost>
    <name type="scientific">Cymbidium aloifolium</name>
    <dbReference type="NCBI Taxonomy" id="112603"/>
</organismHost>
<organismHost>
    <name type="scientific">Cymbidium hybrid cultivar</name>
    <dbReference type="NCBI Taxonomy" id="28471"/>
</organismHost>
<organismHost>
    <name type="scientific">Cymbidium iridioides</name>
    <dbReference type="NCBI Taxonomy" id="160533"/>
</organismHost>
<organismHost>
    <name type="scientific">Epidendrum</name>
    <dbReference type="NCBI Taxonomy" id="38234"/>
</organismHost>
<organismHost>
    <name type="scientific">Laelia</name>
    <dbReference type="NCBI Taxonomy" id="123155"/>
</organismHost>
<organismHost>
    <name type="scientific">Oncidium</name>
    <dbReference type="NCBI Taxonomy" id="45173"/>
</organismHost>
<organismHost>
    <name type="scientific">Phaius tancarvilleae</name>
    <name type="common">Nun's hood orchid</name>
    <name type="synonym">Greater swamp orchid</name>
    <dbReference type="NCBI Taxonomy" id="120015"/>
</organismHost>
<organismHost>
    <name type="scientific">Phalaenopsis</name>
    <dbReference type="NCBI Taxonomy" id="36459"/>
</organismHost>
<organismHost>
    <name type="scientific">Vanda</name>
    <dbReference type="NCBI Taxonomy" id="38198"/>
</organismHost>
<organismHost>
    <name type="scientific">Zygopetalum</name>
    <dbReference type="NCBI Taxonomy" id="78858"/>
</organismHost>
<dbReference type="EMBL" id="X62133">
    <property type="protein sequence ID" value="CAA44064.1"/>
    <property type="molecule type" value="Genomic_RNA"/>
</dbReference>
<dbReference type="PIR" id="S22493">
    <property type="entry name" value="S22493"/>
</dbReference>
<dbReference type="SMR" id="Q00467"/>
<dbReference type="ABCD" id="Q00467">
    <property type="antibodies" value="1 sequenced antibody"/>
</dbReference>
<dbReference type="GO" id="GO:0019029">
    <property type="term" value="C:helical viral capsid"/>
    <property type="evidence" value="ECO:0007669"/>
    <property type="project" value="UniProtKB-KW"/>
</dbReference>
<dbReference type="GO" id="GO:1990904">
    <property type="term" value="C:ribonucleoprotein complex"/>
    <property type="evidence" value="ECO:0007669"/>
    <property type="project" value="UniProtKB-KW"/>
</dbReference>
<dbReference type="GO" id="GO:0005198">
    <property type="term" value="F:structural molecule activity"/>
    <property type="evidence" value="ECO:0007669"/>
    <property type="project" value="InterPro"/>
</dbReference>
<dbReference type="InterPro" id="IPR000052">
    <property type="entry name" value="Pltvir_coat"/>
</dbReference>
<dbReference type="Pfam" id="PF00286">
    <property type="entry name" value="Flexi_CP"/>
    <property type="match status" value="1"/>
</dbReference>
<dbReference type="PRINTS" id="PR00232">
    <property type="entry name" value="POTXCARLCOAT"/>
</dbReference>
<dbReference type="PROSITE" id="PS00418">
    <property type="entry name" value="POTEX_CARLAVIRUS_COAT"/>
    <property type="match status" value="1"/>
</dbReference>
<sequence length="220" mass="23571">MGEPTPTPAATYSAADPTSAPKLADLAAIKYSPITSSIATPEEIKAITQLWVNNLGLPADTVGTAAIDLARAYADVGASKSATLLGFCPTKPDVRRAALAAQIFVANVTPRQFCAYYAKVVWNLMLATNDPPANWAKAGFQEDTRFAAFDFFDAVDSTGALEPAECSAAPLTATCALDREVRRPCPSAYPERQPHHQHCRGHQGPSWLHQHSLRSACTPY</sequence>
<reference key="1">
    <citation type="journal article" date="1992" name="Plant Mol. Biol.">
        <title>Characterization of cymbidium mosaic virus coat protein gene and its expression in transgenic tobacco plants.</title>
        <authorList>
            <person name="Chia T.F."/>
            <person name="Chan Y.S."/>
            <person name="Chua N.H."/>
        </authorList>
    </citation>
    <scope>NUCLEOTIDE SEQUENCE [GENOMIC RNA]</scope>
</reference>
<reference key="2">
    <citation type="journal article" date="2005" name="Mol. Plant Microbe Interact.">
        <title>A new cell-to-cell transport model for Potexviruses.</title>
        <authorList>
            <person name="Verchot-Lubicz J."/>
        </authorList>
    </citation>
    <scope>REVIEW</scope>
</reference>
<feature type="chain" id="PRO_0000222619" description="Coat protein">
    <location>
        <begin position="1"/>
        <end position="220"/>
    </location>
</feature>
<organism>
    <name type="scientific">Cymbidium mosaic virus (strain Singapore)</name>
    <dbReference type="NCBI Taxonomy" id="31725"/>
    <lineage>
        <taxon>Viruses</taxon>
        <taxon>Riboviria</taxon>
        <taxon>Orthornavirae</taxon>
        <taxon>Kitrinoviricota</taxon>
        <taxon>Alsuviricetes</taxon>
        <taxon>Tymovirales</taxon>
        <taxon>Alphaflexiviridae</taxon>
        <taxon>Potexvirus</taxon>
        <taxon>Cymbidium mosaic virus</taxon>
    </lineage>
</organism>
<evidence type="ECO:0000305" key="1"/>
<accession>Q00467</accession>
<keyword id="KW-0167">Capsid protein</keyword>
<keyword id="KW-1139">Helical capsid protein</keyword>
<keyword id="KW-0687">Ribonucleoprotein</keyword>
<keyword id="KW-0946">Virion</keyword>
<name>CAPSD_CMVSI</name>
<comment type="function">
    <text>Required for genome encapsidation. Forms ribonucleoprotein complexes along with TGB1 helicase and viral RNA.</text>
</comment>
<comment type="subcellular location">
    <subcellularLocation>
        <location evidence="1">Virion</location>
    </subcellularLocation>
</comment>
<comment type="similarity">
    <text evidence="1">Belongs to the potexvirus capsid protein family.</text>
</comment>